<organism>
    <name type="scientific">Rhodospirillum centenum (strain ATCC 51521 / SW)</name>
    <dbReference type="NCBI Taxonomy" id="414684"/>
    <lineage>
        <taxon>Bacteria</taxon>
        <taxon>Pseudomonadati</taxon>
        <taxon>Pseudomonadota</taxon>
        <taxon>Alphaproteobacteria</taxon>
        <taxon>Rhodospirillales</taxon>
        <taxon>Rhodospirillaceae</taxon>
        <taxon>Rhodospirillum</taxon>
    </lineage>
</organism>
<sequence>MTTRIVVAQILGAHGVHGRVKLKSFTADETAVFGYAPLTDESGRREFKLRRTGTGKDHFLAEVDGITGKEAADALRGTRLYIERDRLPAPEDEDEFYHADLIGLDTVTADDQPFGTIKAIYDFGAGDMLEIRHVSEKTVFLPFTKACVPVIEIAAGRVVVEPPANFFAPAGPQPAEGEEMPDGALEALEGEEAGAGTAPQP</sequence>
<comment type="function">
    <text evidence="1">An accessory protein needed during the final step in the assembly of 30S ribosomal subunit, possibly for assembly of the head region. Essential for efficient processing of 16S rRNA. May be needed both before and after RbfA during the maturation of 16S rRNA. It has affinity for free ribosomal 30S subunits but not for 70S ribosomes.</text>
</comment>
<comment type="subunit">
    <text evidence="1">Binds ribosomal protein uS19.</text>
</comment>
<comment type="subcellular location">
    <subcellularLocation>
        <location evidence="1">Cytoplasm</location>
    </subcellularLocation>
</comment>
<comment type="domain">
    <text evidence="1">The PRC barrel domain binds ribosomal protein uS19.</text>
</comment>
<comment type="similarity">
    <text evidence="1">Belongs to the RimM family.</text>
</comment>
<feature type="chain" id="PRO_1000089515" description="Ribosome maturation factor RimM">
    <location>
        <begin position="1"/>
        <end position="201"/>
    </location>
</feature>
<feature type="domain" description="PRC barrel" evidence="1">
    <location>
        <begin position="92"/>
        <end position="166"/>
    </location>
</feature>
<feature type="region of interest" description="Disordered" evidence="2">
    <location>
        <begin position="169"/>
        <end position="201"/>
    </location>
</feature>
<protein>
    <recommendedName>
        <fullName evidence="1">Ribosome maturation factor RimM</fullName>
    </recommendedName>
</protein>
<dbReference type="EMBL" id="CP000613">
    <property type="protein sequence ID" value="ACI99595.1"/>
    <property type="molecule type" value="Genomic_DNA"/>
</dbReference>
<dbReference type="RefSeq" id="WP_012567380.1">
    <property type="nucleotide sequence ID" value="NC_011420.2"/>
</dbReference>
<dbReference type="SMR" id="B6IP93"/>
<dbReference type="STRING" id="414684.RC1_2208"/>
<dbReference type="KEGG" id="rce:RC1_2208"/>
<dbReference type="eggNOG" id="COG0806">
    <property type="taxonomic scope" value="Bacteria"/>
</dbReference>
<dbReference type="HOGENOM" id="CLU_077636_0_1_5"/>
<dbReference type="OrthoDB" id="9788191at2"/>
<dbReference type="Proteomes" id="UP000001591">
    <property type="component" value="Chromosome"/>
</dbReference>
<dbReference type="GO" id="GO:0005737">
    <property type="term" value="C:cytoplasm"/>
    <property type="evidence" value="ECO:0007669"/>
    <property type="project" value="UniProtKB-SubCell"/>
</dbReference>
<dbReference type="GO" id="GO:0005840">
    <property type="term" value="C:ribosome"/>
    <property type="evidence" value="ECO:0007669"/>
    <property type="project" value="InterPro"/>
</dbReference>
<dbReference type="GO" id="GO:0043022">
    <property type="term" value="F:ribosome binding"/>
    <property type="evidence" value="ECO:0007669"/>
    <property type="project" value="InterPro"/>
</dbReference>
<dbReference type="GO" id="GO:0042274">
    <property type="term" value="P:ribosomal small subunit biogenesis"/>
    <property type="evidence" value="ECO:0007669"/>
    <property type="project" value="UniProtKB-UniRule"/>
</dbReference>
<dbReference type="GO" id="GO:0006364">
    <property type="term" value="P:rRNA processing"/>
    <property type="evidence" value="ECO:0007669"/>
    <property type="project" value="UniProtKB-UniRule"/>
</dbReference>
<dbReference type="Gene3D" id="2.30.30.240">
    <property type="entry name" value="PRC-barrel domain"/>
    <property type="match status" value="1"/>
</dbReference>
<dbReference type="Gene3D" id="2.40.30.60">
    <property type="entry name" value="RimM"/>
    <property type="match status" value="1"/>
</dbReference>
<dbReference type="HAMAP" id="MF_00014">
    <property type="entry name" value="Ribosome_mat_RimM"/>
    <property type="match status" value="1"/>
</dbReference>
<dbReference type="InterPro" id="IPR011033">
    <property type="entry name" value="PRC_barrel-like_sf"/>
</dbReference>
<dbReference type="InterPro" id="IPR056792">
    <property type="entry name" value="PRC_RimM"/>
</dbReference>
<dbReference type="InterPro" id="IPR011961">
    <property type="entry name" value="RimM"/>
</dbReference>
<dbReference type="InterPro" id="IPR002676">
    <property type="entry name" value="RimM_N"/>
</dbReference>
<dbReference type="InterPro" id="IPR036976">
    <property type="entry name" value="RimM_N_sf"/>
</dbReference>
<dbReference type="InterPro" id="IPR009000">
    <property type="entry name" value="Transl_B-barrel_sf"/>
</dbReference>
<dbReference type="NCBIfam" id="TIGR02273">
    <property type="entry name" value="16S_RimM"/>
    <property type="match status" value="1"/>
</dbReference>
<dbReference type="PANTHER" id="PTHR33692">
    <property type="entry name" value="RIBOSOME MATURATION FACTOR RIMM"/>
    <property type="match status" value="1"/>
</dbReference>
<dbReference type="PANTHER" id="PTHR33692:SF1">
    <property type="entry name" value="RIBOSOME MATURATION FACTOR RIMM"/>
    <property type="match status" value="1"/>
</dbReference>
<dbReference type="Pfam" id="PF24986">
    <property type="entry name" value="PRC_RimM"/>
    <property type="match status" value="1"/>
</dbReference>
<dbReference type="Pfam" id="PF01782">
    <property type="entry name" value="RimM"/>
    <property type="match status" value="1"/>
</dbReference>
<dbReference type="SUPFAM" id="SSF50346">
    <property type="entry name" value="PRC-barrel domain"/>
    <property type="match status" value="1"/>
</dbReference>
<dbReference type="SUPFAM" id="SSF50447">
    <property type="entry name" value="Translation proteins"/>
    <property type="match status" value="1"/>
</dbReference>
<gene>
    <name evidence="1" type="primary">rimM</name>
    <name type="ordered locus">RC1_2208</name>
</gene>
<name>RIMM_RHOCS</name>
<reference key="1">
    <citation type="submission" date="2007-03" db="EMBL/GenBank/DDBJ databases">
        <title>Genome sequence of Rhodospirillum centenum.</title>
        <authorList>
            <person name="Touchman J.W."/>
            <person name="Bauer C."/>
            <person name="Blankenship R.E."/>
        </authorList>
    </citation>
    <scope>NUCLEOTIDE SEQUENCE [LARGE SCALE GENOMIC DNA]</scope>
    <source>
        <strain>ATCC 51521 / SW</strain>
    </source>
</reference>
<evidence type="ECO:0000255" key="1">
    <source>
        <dbReference type="HAMAP-Rule" id="MF_00014"/>
    </source>
</evidence>
<evidence type="ECO:0000256" key="2">
    <source>
        <dbReference type="SAM" id="MobiDB-lite"/>
    </source>
</evidence>
<proteinExistence type="inferred from homology"/>
<accession>B6IP93</accession>
<keyword id="KW-0143">Chaperone</keyword>
<keyword id="KW-0963">Cytoplasm</keyword>
<keyword id="KW-1185">Reference proteome</keyword>
<keyword id="KW-0690">Ribosome biogenesis</keyword>
<keyword id="KW-0698">rRNA processing</keyword>